<reference key="1">
    <citation type="journal article" date="1985" name="Nature">
        <title>Primary structure of bovine thyroglobulin deduced from the sequence of its 8,431-base complementary DNA.</title>
        <authorList>
            <person name="Mercken L."/>
            <person name="Simons M.-J."/>
            <person name="Swillens S."/>
            <person name="Massaer M."/>
            <person name="Vassart G."/>
        </authorList>
    </citation>
    <scope>NUCLEOTIDE SEQUENCE [MRNA]</scope>
</reference>
<reference key="2">
    <citation type="journal article" date="1985" name="Eur. J. Biochem.">
        <title>Presence of hormonogenic and repetitive domains in the first 930 amino acids of bovine thyroglobulin as deduced from the cDNA sequence.</title>
        <authorList>
            <person name="Mercken L."/>
            <person name="Simons M.-J."/>
            <person name="de Martynhoff G."/>
            <person name="Swillens S."/>
            <person name="Vassart G."/>
        </authorList>
    </citation>
    <scope>NUCLEOTIDE SEQUENCE [MRNA] OF 1-930</scope>
</reference>
<reference key="3">
    <citation type="journal article" date="1987" name="Eur. J. Biochem.">
        <title>Structural organization of the bovine thyroglobulin gene and of its 5'-flanking region.</title>
        <authorList>
            <person name="de Martynhoff G."/>
            <person name="Pohl V."/>
            <person name="Mercken L."/>
            <person name="van Ommen G.-J."/>
            <person name="Vassart G."/>
        </authorList>
    </citation>
    <scope>NUCLEOTIDE SEQUENCE [GENOMIC DNA] OF 1-22</scope>
</reference>
<reference key="4">
    <citation type="journal article" date="1987" name="J. Mol. Biol.">
        <title>Structural organization of the 5' region of the thyroglobulin gene. Evidence for intron loss and 'exonization' during evolution.</title>
        <authorList>
            <person name="Parma J."/>
            <person name="Christophe D."/>
            <person name="Pohl V."/>
            <person name="Vassart G."/>
        </authorList>
    </citation>
    <scope>NUCLEOTIDE SEQUENCE [GENOMIC DNA] OF 1002-1209</scope>
</reference>
<reference key="5">
    <citation type="journal article" date="1993" name="Arch. Biochem. Biophys.">
        <title>Thyroglobulin glycosylation: location and nature of the N-linked oligosaccharide units in bovine thyroglobulin.</title>
        <authorList>
            <person name="Rawitch A.B."/>
            <person name="Pollock H.G."/>
            <person name="Yang S.X."/>
        </authorList>
    </citation>
    <scope>TISSUE SPECIFICITY</scope>
    <scope>GLYCOSYLATION AT ASN-110; ASN-483; ASN-495; ASN-853; ASN-947; ASN-1140; ASN-1365; ASN-1776; ASN-1870; ASN-2014; ASN-2123; ASN-2251 AND ASN-2296</scope>
    <scope>LACK OF GLYCOSYLATION AT ASN-198</scope>
    <scope>STRUCTURE OF CARBOHYDRATE</scope>
</reference>
<name>THYG_BOVIN</name>
<keyword id="KW-0002">3D-structure</keyword>
<keyword id="KW-1015">Disulfide bond</keyword>
<keyword id="KW-0325">Glycoprotein</keyword>
<keyword id="KW-0372">Hormone</keyword>
<keyword id="KW-0405">Iodination</keyword>
<keyword id="KW-1185">Reference proteome</keyword>
<keyword id="KW-0677">Repeat</keyword>
<keyword id="KW-0964">Secreted</keyword>
<keyword id="KW-0732">Signal</keyword>
<keyword id="KW-0765">Sulfation</keyword>
<keyword id="KW-0795">Thyroid hormone</keyword>
<keyword id="KW-0893">Thyroid hormones biosynthesis</keyword>
<evidence type="ECO:0000250" key="1">
    <source>
        <dbReference type="UniProtKB" id="F1RRV3"/>
    </source>
</evidence>
<evidence type="ECO:0000250" key="2">
    <source>
        <dbReference type="UniProtKB" id="O08710"/>
    </source>
</evidence>
<evidence type="ECO:0000250" key="3">
    <source>
        <dbReference type="UniProtKB" id="P01266"/>
    </source>
</evidence>
<evidence type="ECO:0000255" key="4">
    <source>
        <dbReference type="PROSITE-ProRule" id="PRU00500"/>
    </source>
</evidence>
<evidence type="ECO:0000256" key="5">
    <source>
        <dbReference type="SAM" id="MobiDB-lite"/>
    </source>
</evidence>
<evidence type="ECO:0000269" key="6">
    <source>
    </source>
</evidence>
<evidence type="ECO:0000305" key="7"/>
<evidence type="ECO:0007829" key="8">
    <source>
        <dbReference type="PDB" id="7QTQ"/>
    </source>
</evidence>
<gene>
    <name type="primary">TG</name>
</gene>
<dbReference type="EMBL" id="X02815">
    <property type="protein sequence ID" value="CAA26584.1"/>
    <property type="molecule type" value="mRNA"/>
</dbReference>
<dbReference type="EMBL" id="X02155">
    <property type="protein sequence ID" value="CAA26090.1"/>
    <property type="molecule type" value="mRNA"/>
</dbReference>
<dbReference type="EMBL" id="X05380">
    <property type="protein sequence ID" value="CAA28971.1"/>
    <property type="status" value="ALT_SEQ"/>
    <property type="molecule type" value="Genomic_DNA"/>
</dbReference>
<dbReference type="EMBL" id="X06071">
    <property type="protein sequence ID" value="CAA29457.1"/>
    <property type="molecule type" value="Genomic_DNA"/>
</dbReference>
<dbReference type="EMBL" id="X06072">
    <property type="protein sequence ID" value="CAA29457.1"/>
    <property type="status" value="JOINED"/>
    <property type="molecule type" value="Genomic_DNA"/>
</dbReference>
<dbReference type="EMBL" id="X06073">
    <property type="protein sequence ID" value="CAA29457.1"/>
    <property type="status" value="JOINED"/>
    <property type="molecule type" value="Genomic_DNA"/>
</dbReference>
<dbReference type="EMBL" id="X06074">
    <property type="protein sequence ID" value="CAA29457.1"/>
    <property type="status" value="JOINED"/>
    <property type="molecule type" value="Genomic_DNA"/>
</dbReference>
<dbReference type="EMBL" id="X06075">
    <property type="protein sequence ID" value="CAA29457.1"/>
    <property type="status" value="JOINED"/>
    <property type="molecule type" value="Genomic_DNA"/>
</dbReference>
<dbReference type="PIR" id="A01533">
    <property type="entry name" value="UIBO"/>
</dbReference>
<dbReference type="RefSeq" id="NP_776308.1">
    <property type="nucleotide sequence ID" value="NM_173883.2"/>
</dbReference>
<dbReference type="PDB" id="7QTQ">
    <property type="method" value="EM"/>
    <property type="resolution" value="3.30 A"/>
    <property type="chains" value="A/B=1-2769"/>
</dbReference>
<dbReference type="PDBsum" id="7QTQ"/>
<dbReference type="EMDB" id="EMD-14145"/>
<dbReference type="SASBDB" id="P01267"/>
<dbReference type="SMR" id="P01267"/>
<dbReference type="FunCoup" id="P01267">
    <property type="interactions" value="110"/>
</dbReference>
<dbReference type="IntAct" id="P01267">
    <property type="interactions" value="1"/>
</dbReference>
<dbReference type="STRING" id="9913.ENSBTAP00000064000"/>
<dbReference type="Allergome" id="11790">
    <property type="allergen name" value="Bos d TG"/>
</dbReference>
<dbReference type="ESTHER" id="bovin-thyro">
    <property type="family name" value="Thyroglobulin"/>
</dbReference>
<dbReference type="MEROPS" id="I31.950"/>
<dbReference type="MEROPS" id="S09.978"/>
<dbReference type="GlyConnect" id="598">
    <property type="glycosylation" value="1 N-Linked glycan"/>
</dbReference>
<dbReference type="GlyCosmos" id="P01267">
    <property type="glycosylation" value="13 sites, 2 glycans"/>
</dbReference>
<dbReference type="GlyGen" id="P01267">
    <property type="glycosylation" value="14 sites, 1 N-linked glycan (1 site)"/>
</dbReference>
<dbReference type="iPTMnet" id="P01267"/>
<dbReference type="PaxDb" id="9913-ENSBTAP00000010295"/>
<dbReference type="ABCD" id="P01267">
    <property type="antibodies" value="3 sequenced antibodies"/>
</dbReference>
<dbReference type="GeneID" id="280706"/>
<dbReference type="KEGG" id="bta:280706"/>
<dbReference type="CTD" id="7038"/>
<dbReference type="eggNOG" id="KOG1214">
    <property type="taxonomic scope" value="Eukaryota"/>
</dbReference>
<dbReference type="InParanoid" id="P01267"/>
<dbReference type="OrthoDB" id="6409105at2759"/>
<dbReference type="Proteomes" id="UP000009136">
    <property type="component" value="Unplaced"/>
</dbReference>
<dbReference type="GO" id="GO:0005615">
    <property type="term" value="C:extracellular space"/>
    <property type="evidence" value="ECO:0000250"/>
    <property type="project" value="UniProtKB"/>
</dbReference>
<dbReference type="GO" id="GO:0042393">
    <property type="term" value="F:histone binding"/>
    <property type="evidence" value="ECO:0000353"/>
    <property type="project" value="CAFA"/>
</dbReference>
<dbReference type="GO" id="GO:0005179">
    <property type="term" value="F:hormone activity"/>
    <property type="evidence" value="ECO:0007669"/>
    <property type="project" value="UniProtKB-KW"/>
</dbReference>
<dbReference type="GO" id="GO:0042446">
    <property type="term" value="P:hormone biosynthetic process"/>
    <property type="evidence" value="ECO:0007669"/>
    <property type="project" value="UniProtKB-KW"/>
</dbReference>
<dbReference type="GO" id="GO:0006590">
    <property type="term" value="P:thyroid hormone generation"/>
    <property type="evidence" value="ECO:0000250"/>
    <property type="project" value="UniProtKB"/>
</dbReference>
<dbReference type="CDD" id="cd00191">
    <property type="entry name" value="TY"/>
    <property type="match status" value="9"/>
</dbReference>
<dbReference type="FunFam" id="4.10.800.10:FF:000004">
    <property type="entry name" value="SPARC-related modular calcium-binding protein 1"/>
    <property type="match status" value="1"/>
</dbReference>
<dbReference type="FunFam" id="2.10.50.10:FF:000047">
    <property type="entry name" value="Thyroglobulin"/>
    <property type="match status" value="1"/>
</dbReference>
<dbReference type="FunFam" id="3.40.50.1820:FF:000127">
    <property type="entry name" value="Thyroglobulin"/>
    <property type="match status" value="1"/>
</dbReference>
<dbReference type="FunFam" id="4.10.800.10:FF:000011">
    <property type="entry name" value="Thyroglobulin"/>
    <property type="match status" value="2"/>
</dbReference>
<dbReference type="FunFam" id="4.10.800.10:FF:000012">
    <property type="entry name" value="Thyroglobulin"/>
    <property type="match status" value="1"/>
</dbReference>
<dbReference type="FunFam" id="4.10.800.10:FF:000013">
    <property type="entry name" value="Thyroglobulin"/>
    <property type="match status" value="1"/>
</dbReference>
<dbReference type="FunFam" id="4.10.800.10:FF:000016">
    <property type="entry name" value="Thyroglobulin"/>
    <property type="match status" value="1"/>
</dbReference>
<dbReference type="FunFam" id="4.10.800.10:FF:000017">
    <property type="entry name" value="Thyroglobulin"/>
    <property type="match status" value="1"/>
</dbReference>
<dbReference type="Gene3D" id="3.40.50.1820">
    <property type="entry name" value="alpha/beta hydrolase"/>
    <property type="match status" value="1"/>
</dbReference>
<dbReference type="Gene3D" id="4.10.800.10">
    <property type="entry name" value="Thyroglobulin type-1"/>
    <property type="match status" value="10"/>
</dbReference>
<dbReference type="Gene3D" id="2.10.50.10">
    <property type="entry name" value="Tumor Necrosis Factor Receptor, subunit A, domain 2"/>
    <property type="match status" value="1"/>
</dbReference>
<dbReference type="InterPro" id="IPR029058">
    <property type="entry name" value="AB_hydrolase_fold"/>
</dbReference>
<dbReference type="InterPro" id="IPR002018">
    <property type="entry name" value="CarbesteraseB"/>
</dbReference>
<dbReference type="InterPro" id="IPR019819">
    <property type="entry name" value="Carboxylesterase_B_CS"/>
</dbReference>
<dbReference type="InterPro" id="IPR009030">
    <property type="entry name" value="Growth_fac_rcpt_cys_sf"/>
</dbReference>
<dbReference type="InterPro" id="IPR052001">
    <property type="entry name" value="MHC-II_Gamma/Thyroglobulin"/>
</dbReference>
<dbReference type="InterPro" id="IPR016324">
    <property type="entry name" value="Thyroglobulin"/>
</dbReference>
<dbReference type="InterPro" id="IPR000716">
    <property type="entry name" value="Thyroglobulin_1"/>
</dbReference>
<dbReference type="InterPro" id="IPR036857">
    <property type="entry name" value="Thyroglobulin_1_sf"/>
</dbReference>
<dbReference type="InterPro" id="IPR011641">
    <property type="entry name" value="Tyr-kin_ephrin_A/B_rcpt-like"/>
</dbReference>
<dbReference type="PANTHER" id="PTHR14093">
    <property type="entry name" value="HLA CLASS II GAMMA CHAIN"/>
    <property type="match status" value="1"/>
</dbReference>
<dbReference type="PANTHER" id="PTHR14093:SF19">
    <property type="entry name" value="THYROGLOBULIN"/>
    <property type="match status" value="1"/>
</dbReference>
<dbReference type="Pfam" id="PF00135">
    <property type="entry name" value="COesterase"/>
    <property type="match status" value="1"/>
</dbReference>
<dbReference type="Pfam" id="PF07699">
    <property type="entry name" value="Ephrin_rec_like"/>
    <property type="match status" value="1"/>
</dbReference>
<dbReference type="Pfam" id="PF00086">
    <property type="entry name" value="Thyroglobulin_1"/>
    <property type="match status" value="11"/>
</dbReference>
<dbReference type="PIRSF" id="PIRSF001831">
    <property type="entry name" value="Thyroglobulin"/>
    <property type="match status" value="1"/>
</dbReference>
<dbReference type="SMART" id="SM01411">
    <property type="entry name" value="Ephrin_rec_like"/>
    <property type="match status" value="1"/>
</dbReference>
<dbReference type="SMART" id="SM00211">
    <property type="entry name" value="TY"/>
    <property type="match status" value="10"/>
</dbReference>
<dbReference type="SUPFAM" id="SSF53474">
    <property type="entry name" value="alpha/beta-Hydrolases"/>
    <property type="match status" value="1"/>
</dbReference>
<dbReference type="SUPFAM" id="SSF57184">
    <property type="entry name" value="Growth factor receptor domain"/>
    <property type="match status" value="1"/>
</dbReference>
<dbReference type="SUPFAM" id="SSF57610">
    <property type="entry name" value="Thyroglobulin type-1 domain"/>
    <property type="match status" value="11"/>
</dbReference>
<dbReference type="PROSITE" id="PS00941">
    <property type="entry name" value="CARBOXYLESTERASE_B_2"/>
    <property type="match status" value="1"/>
</dbReference>
<dbReference type="PROSITE" id="PS00484">
    <property type="entry name" value="THYROGLOBULIN_1_1"/>
    <property type="match status" value="9"/>
</dbReference>
<dbReference type="PROSITE" id="PS51162">
    <property type="entry name" value="THYROGLOBULIN_1_2"/>
    <property type="match status" value="11"/>
</dbReference>
<accession>P01267</accession>
<accession>O18976</accession>
<accession>Q28196</accession>
<accession>Q95478</accession>
<comment type="function">
    <text evidence="1 2 3">Acts as a substrate for the production of iodinated thyroid hormones thyroxine (T4) and triiodothyronine (T3) (By similarity). The synthesis of T3 and T4 involves iodination of selected tyrosine residues of TG/thyroglobulin followed by their oxidative coupling (By similarity). Following TG re-internalization and lysosomal-mediated proteolysis, T3 and T4 are released from the polypeptide backbone leading to their secretion into the bloodstream (By similarity). One dimer produces 7 thyroid hormone molecules (By similarity).</text>
</comment>
<comment type="subunit">
    <text evidence="2 3">Monomer (By similarity). Homodimer (via ChEL region); occurs in the endoplasmic reticulum and is required for export to the Golgi apparatus (By similarity). Homooligomer; disulfide-linked; stored in this form in the thyroid follicle lumen (By similarity).</text>
</comment>
<comment type="subcellular location">
    <subcellularLocation>
        <location evidence="2">Secreted</location>
    </subcellularLocation>
    <text evidence="2">Secreted into the thyroid follicle lumen. Localizes to colloid globules, a structure formed in the thyroid follicle lumen consisting of cross-linked TG arranged in concentric layers.</text>
</comment>
<comment type="tissue specificity">
    <text evidence="6">Specifically expressed in the thyroid gland.</text>
</comment>
<comment type="domain">
    <text evidence="2">The cholinesterase-like (ChEL) region is required for dimerization and export from the endoplasmic reticulum.</text>
</comment>
<comment type="PTM">
    <text evidence="1 3">Iodinated on tyrosine residues by TPO (By similarity). There are 4 pairs of iodinated tyrosines used for coupling: acceptor Tyr-24 is coupled to donor Tyr-149 or Tyr-234, acceptor Tyr-2574 is coupled to donor Tyr-2541, acceptor Tyr-2767 in monomer 1 is coupled to donor Tyr-2767 in monomer 2 and acceptor Tyr-1310 in monomer 1 is coupled to donor Tyr-108 in monomer 2 (By similarity).</text>
</comment>
<comment type="PTM">
    <text evidence="3">Sulfated tyrosines are desulfated during iodination.</text>
</comment>
<comment type="PTM">
    <text evidence="2">Undergoes sequential proteolysis by cathepsins to release thyroxine (T4) and triiodothyronine (T3) hormones. In the thyroid follicle lumen, cross-linked TG (storage form) is solubilized by limited proteolysis mediated by cathepsins CTSB and/or CTSL. Partially cleaved TG is further processed by CTSK/cathepsin K and/or CTSL resulting in the release of T4. Following endocytosis, further processing occurs leading to the release of T3 and more T4 hormones.</text>
</comment>
<comment type="similarity">
    <text evidence="7">Belongs to the type-B carboxylesterase/lipase family.</text>
</comment>
<comment type="caution">
    <text evidence="7">The cholinesterase-like (ChEL) region lacks the Ser residue of the catalytic triad suggesting that it has no esterase activity.</text>
</comment>
<organism>
    <name type="scientific">Bos taurus</name>
    <name type="common">Bovine</name>
    <dbReference type="NCBI Taxonomy" id="9913"/>
    <lineage>
        <taxon>Eukaryota</taxon>
        <taxon>Metazoa</taxon>
        <taxon>Chordata</taxon>
        <taxon>Craniata</taxon>
        <taxon>Vertebrata</taxon>
        <taxon>Euteleostomi</taxon>
        <taxon>Mammalia</taxon>
        <taxon>Eutheria</taxon>
        <taxon>Laurasiatheria</taxon>
        <taxon>Artiodactyla</taxon>
        <taxon>Ruminantia</taxon>
        <taxon>Pecora</taxon>
        <taxon>Bovidae</taxon>
        <taxon>Bovinae</taxon>
        <taxon>Bos</taxon>
    </lineage>
</organism>
<sequence length="2769" mass="303222">MALALWVFGLLDLICLASANIFEYQVDAQPLRPCELQRERAFLKREDYVPQCAEDGSFQTVQCGKDGASCWCVDADGREVPGSRQPGRPAACLSFCQLQKQQILLSSYINSTATSYLPQCQDSGDYSPVQCDLRRRQCWCVDAEGMEVYGTRQQGRPARCPRSCEIRNRRLLHGVGDRSPPQCSPDGAFRPVQCKLVNTTDMMIFDLVHSYSRFPDAFVTFSSFRSRFPEVSGYCYCADSQGRELAETGLELLLDEIYDTIFAGLDLASTFAETTLYRILQRRFLAVQLVISGRFRCPTKCEVERFAATSFRHPYVPSCHPDGEYQAAQCQQGGPCWCVDSRGQEIPGTRQRGEPPSCAEDQSCPSERRRAFSRLRFGPSGYFSRRSLLLAPEEGPVSQRFARFTASCPPSIKELFLDSGIFQPMLQGRDTRFVAPESLKEAIRGLFPSRELARLALQFTTNAKRLQQNLFGGRFLVKVGQFNLSGALGTRGTFNFSHFFQQLGLPGFQDGRALADLAKPLSVGLNSNPASEAPKASKIDVALRKPVVGSFGFEVNLQENQNALQFLSSFLELPEFLLFLQHAISVPEDIARDLGDVMEMVFSSQGCGQAPGSLFVPACTAEGSYEEVQCFAGDCWCVDAQGRELAGSRVRGGRPRCPTECEKQRARMQSLLGSQPAGSSLFVPACTSKGNFLPVQCFNSECYCVDTEGQPIPGTRSALGEPKKCPSPCQLQAERAFLGTVRTLVSNPSTLPALSSIYIPQCSASGQWSPVQCDGPPEQAFEWYERWEAQNSAGQALTPAELLMKIMSYREAASRNFRLFIQNLYEAGQQGIFPGLARYSSFQDVPVSVLEGNQTQPGGNVFLEPYLFWQILNGQLDRYPGPYSDFSAPLAHFDLRSCWCVDEAGQKLEGTRNEPNKVPACPGSCEEVKLRVLQFIREAEEIVTYSNSSRFPLGESFLAAKGIRLTDEELAFPPLSPSRETFLEKFLSGSDYAIRLAAQSTFDFYQRRLVTLAESPRAPSPVWSSAYLPQCDAFGGWEPVQCHAATGHCWCVDGKGEYVPTSLTARSRQIPQCPTSCERLRASGLLSSWKQAGVQAEPSPKDLFIPTCLETGEFARLQASEAGTWCVDPASGEGVPPGTNSSAQCPSLCEVLQSGVPSRRTSPGYSPACRAEDGGFSPVQCDPAQGSCWCVLGSGEEVPGTRVAGSQPACESPQCPLPFSVADVAGGAILCERASGLGAAAGQRCQLRCSQGYRSAFPPEPLLCSVQRRRWESRPPQPRACQRPQFWQTLQTQAQFQLLLPLGKVCSADYSGLLLAFQVFLLDELTARGFCQIQVKTAGTPVSIPVCDDSSVKVECLSRERLGVNITWKLQLVDAPPASLPDLQDVEEALAGKYLAGRFADLIQSGTFQLHLDSKTFSADTSIRFLQGDRFGTSPRTQFGCLEGFGRVVAASDASQDALGCVKCPEGSYFQDEQCIPCPAGFYQEQAGSLACVPCPEGRTTVYAGAFSQTHCVTDCQKNEVGLQCDQDSQYRASQRDRTSGKAFCVDGEGRRLPWTEAEAPLVDAQCLVMRKFEKLPESKVIFSADVAVMVRSEVPGSESSLMQCLADCALDEACGFLTVSTAGSEVSCDFYAWASDSIACTTSGRSEDALGTSQATSFGSLQCQVKVRSREGDPLAVYLKKGQEFTITGQKRFEQTGFQSALSGMYSPVTFSASGASLAEVHLFCLLACDHDSCCDGFILVQVQGGPLLCGLLSSPDVLLCHVRDWRDPAEAQANASCPGVTYDQDSRQVTLRLGGQEIRGLTPLEGTQDTLTSFQQVYLWKDSDMGSRSESMGCRRDTEPRPASPSETDLTTGLFSPVDLIQVIVDGNVSLPSQQHWLFKHLFSLQQANLWCLSRCAGEPSFCQLAEVTDSEPLYFTCTLYPEAQVCDDILESSPKGCRLILPRRPSALYRKKVVLQDRVKNFYNRLPFQKLTGISIRNKVPMSDKSISSGFFECERLCDMDPCCTGFGFLNVSQLKGGEVTCLTLNSLGLQTCSEEYGGVWRILDCGSPDTEVRTYPFGWYQKPVSPSDAPSFCPSVALPALTENVALDSWQSLALSSVIVDPSIRNFDVAHISTAAVGNFSAARDRCLWECSRHQDCLVTTLQTQPGAVRCMFYADTQSCTHSLQAQNCRLLLHEEATYIYRKPNIPLPGFGTSSPSVPIATHGQLLGRSQAIQVGTSWKPVDQFLGVPYAAPPLGEKRFRAPEHLNWTGSWEATKPRARCWQPGIRTPTPPGVSEDCLYLNVFVPQNMAPNASVLVFFHNAAEGKGSGDRPAVDGSFLAAVGNLIVVTASYRTGIFGFLSSGSSELSGNWGLLDQVVALTWVQTHIQAFGGDPRRVTLAADRGGADIASIHLVTTRAANSRLFRRAVLMGGSALSPAAVIRPERARQQAAALAKEVGCPSSSVQEMVSCLRQEPARILNDAQTKLLAVSGPFHYWGPVVDGQYLRETPARVLQRAPRVKVDLLIGSSQDDGLINRAKAVKQFEESQGRTSSKTAFYQALQNSLGGEAADAGVQAAATWYYSLEHDSDDYASFSRALEQATRDYFIICPVIDMASHWARTVRGNVFMYHAPESYSHSSLELLTDVLYAFGLPFYPAYEGQFTLEEKSLSLKIMQYFSNFIRSGNPNYPHEFSRRAPEFAAPWPDFVPRDGAESYKELSVLLPNRQGLKKADCSFWSKYIQSLKASADETKDGPSADSEEEDQPAGSGLTEDLLGLPELASKTYSK</sequence>
<proteinExistence type="evidence at protein level"/>
<feature type="signal peptide" evidence="1">
    <location>
        <begin position="1"/>
        <end position="19"/>
    </location>
</feature>
<feature type="chain" id="PRO_0000008635" description="Thyroglobulin">
    <location>
        <begin position="20"/>
        <end position="2769"/>
    </location>
</feature>
<feature type="domain" description="Thyroglobulin type-1 1" evidence="4">
    <location>
        <begin position="31"/>
        <end position="92"/>
    </location>
</feature>
<feature type="domain" description="Thyroglobulin type-1 2" evidence="4">
    <location>
        <begin position="93"/>
        <end position="160"/>
    </location>
</feature>
<feature type="domain" description="Thyroglobulin type-1 3" evidence="4">
    <location>
        <begin position="161"/>
        <end position="297"/>
    </location>
</feature>
<feature type="domain" description="Thyroglobulin type-1 4" evidence="4">
    <location>
        <begin position="298"/>
        <end position="358"/>
    </location>
</feature>
<feature type="domain" description="Thyroglobulin type-1 5" evidence="4">
    <location>
        <begin position="604"/>
        <end position="657"/>
    </location>
</feature>
<feature type="domain" description="Thyroglobulin type-1 6" evidence="4">
    <location>
        <begin position="658"/>
        <end position="725"/>
    </location>
</feature>
<feature type="domain" description="Thyroglobulin type-1 7" evidence="4">
    <location>
        <begin position="726"/>
        <end position="921"/>
    </location>
</feature>
<feature type="domain" description="Thyroglobulin type-1 8" evidence="4">
    <location>
        <begin position="922"/>
        <end position="1073"/>
    </location>
</feature>
<feature type="domain" description="Thyroglobulin type-1 9" evidence="4">
    <location>
        <begin position="1074"/>
        <end position="1145"/>
    </location>
</feature>
<feature type="domain" description="Thyroglobulin type-1 10" evidence="4">
    <location>
        <begin position="1146"/>
        <end position="1210"/>
    </location>
</feature>
<feature type="repeat" description="Type II" evidence="3">
    <location>
        <begin position="1458"/>
        <end position="1471"/>
    </location>
</feature>
<feature type="repeat" description="Type II" evidence="3">
    <location>
        <begin position="1472"/>
        <end position="1488"/>
    </location>
</feature>
<feature type="repeat" description="Type II" evidence="3">
    <location>
        <begin position="1489"/>
        <end position="1505"/>
    </location>
</feature>
<feature type="domain" description="Thyroglobulin type-1 11" evidence="4">
    <location>
        <begin position="1513"/>
        <end position="1567"/>
    </location>
</feature>
<feature type="repeat" description="Type IIIA" evidence="3">
    <location>
        <begin position="1605"/>
        <end position="1725"/>
    </location>
</feature>
<feature type="repeat" description="Type IIIB" evidence="3">
    <location>
        <begin position="1726"/>
        <end position="1893"/>
    </location>
</feature>
<feature type="repeat" description="Type IIIA" evidence="3">
    <location>
        <begin position="1894"/>
        <end position="1996"/>
    </location>
</feature>
<feature type="repeat" description="Type IIIB" evidence="3">
    <location>
        <begin position="1997"/>
        <end position="2130"/>
    </location>
</feature>
<feature type="repeat" description="Type IIIA" evidence="3">
    <location>
        <begin position="2131"/>
        <end position="2188"/>
    </location>
</feature>
<feature type="region of interest" description="Disordered" evidence="5">
    <location>
        <begin position="1827"/>
        <end position="1851"/>
    </location>
</feature>
<feature type="region of interest" description="Cholinesterase-like (ChEL)" evidence="2">
    <location>
        <begin position="2189"/>
        <end position="2769"/>
    </location>
</feature>
<feature type="region of interest" description="Disordered" evidence="5">
    <location>
        <begin position="2730"/>
        <end position="2769"/>
    </location>
</feature>
<feature type="compositionally biased region" description="Basic and acidic residues" evidence="5">
    <location>
        <begin position="1827"/>
        <end position="1842"/>
    </location>
</feature>
<feature type="site" description="Not glycosylated" evidence="6">
    <location>
        <position position="198"/>
    </location>
</feature>
<feature type="modified residue" description="Iodotyrosine; alternate" evidence="3">
    <location>
        <position position="24"/>
    </location>
</feature>
<feature type="modified residue" description="Sulfotyrosine; alternate" evidence="1">
    <location>
        <position position="24"/>
    </location>
</feature>
<feature type="modified residue" description="Thyroxine; alternate" evidence="3">
    <location>
        <position position="24"/>
    </location>
</feature>
<feature type="modified residue" description="Triiodothyronine; alternate" evidence="3">
    <location>
        <position position="24"/>
    </location>
</feature>
<feature type="modified residue" description="Iodotyrosine" evidence="3">
    <location>
        <position position="108"/>
    </location>
</feature>
<feature type="modified residue" description="Diiodotyrosine; alternate" evidence="3">
    <location>
        <position position="149"/>
    </location>
</feature>
<feature type="modified residue" description="Iodotyrosine; alternate" evidence="3">
    <location>
        <position position="149"/>
    </location>
</feature>
<feature type="modified residue" description="Iodotyrosine" evidence="3">
    <location>
        <position position="234"/>
    </location>
</feature>
<feature type="modified residue" description="Iodotyrosine" evidence="3">
    <location>
        <position position="258"/>
    </location>
</feature>
<feature type="modified residue" description="Diiodotyrosine; alternate" evidence="3">
    <location>
        <position position="703"/>
    </location>
</feature>
<feature type="modified residue" description="Iodotyrosine; alternate" evidence="3">
    <location>
        <position position="703"/>
    </location>
</feature>
<feature type="modified residue" description="Thyroxine; alternate" evidence="3">
    <location>
        <position position="703"/>
    </location>
</feature>
<feature type="modified residue" description="Triiodothyronine; alternate" evidence="3">
    <location>
        <position position="703"/>
    </location>
</feature>
<feature type="modified residue" description="Iodotyrosine" evidence="3">
    <location>
        <position position="784"/>
    </location>
</feature>
<feature type="modified residue" description="Diiodotyrosine; alternate" evidence="3">
    <location>
        <position position="866"/>
    </location>
</feature>
<feature type="modified residue" description="Iodotyrosine; alternate" evidence="3">
    <location>
        <position position="866"/>
    </location>
</feature>
<feature type="modified residue" description="Diiodotyrosine" evidence="3">
    <location>
        <position position="883"/>
    </location>
</feature>
<feature type="modified residue" description="Diiodotyrosine; alternate" evidence="3">
    <location>
        <position position="992"/>
    </location>
</feature>
<feature type="modified residue" description="Iodotyrosine; alternate" evidence="3">
    <location>
        <position position="992"/>
    </location>
</feature>
<feature type="modified residue" description="Iodotyrosine" evidence="3">
    <location>
        <position position="1310"/>
    </location>
</feature>
<feature type="modified residue" description="Thyroxine" evidence="3">
    <location>
        <position position="1310"/>
    </location>
</feature>
<feature type="modified residue" description="Diiodotyrosine; alternate" evidence="3">
    <location>
        <position position="1469"/>
    </location>
</feature>
<feature type="modified residue" description="Iodotyrosine; alternate" evidence="3">
    <location>
        <position position="1469"/>
    </location>
</feature>
<feature type="modified residue" description="Iodotyrosine" evidence="3">
    <location>
        <position position="2185"/>
    </location>
</feature>
<feature type="modified residue" description="Thyroxine" evidence="3">
    <location>
        <position position="2541"/>
    </location>
</feature>
<feature type="modified residue" description="Diiodotyrosine; alternate" evidence="3">
    <location>
        <position position="2574"/>
    </location>
</feature>
<feature type="modified residue" description="Iodotyrosine; alternate" evidence="3">
    <location>
        <position position="2574"/>
    </location>
</feature>
<feature type="modified residue" description="Thyroxine; alternate" evidence="3">
    <location>
        <position position="2574"/>
    </location>
</feature>
<feature type="modified residue" description="Triiodothyronine; alternate" evidence="3">
    <location>
        <position position="2574"/>
    </location>
</feature>
<feature type="modified residue" description="Iodotyrosine" evidence="3">
    <location>
        <position position="2588"/>
    </location>
</feature>
<feature type="modified residue" description="Iodotyrosine" evidence="3">
    <location>
        <position position="2618"/>
    </location>
</feature>
<feature type="modified residue" description="Diiodotyrosine" evidence="3">
    <location>
        <position position="2698"/>
    </location>
</feature>
<feature type="modified residue" description="Diiodotyrosine; alternate" evidence="3">
    <location>
        <position position="2767"/>
    </location>
</feature>
<feature type="modified residue" description="Iodotyrosine; alternate" evidence="3">
    <location>
        <position position="2767"/>
    </location>
</feature>
<feature type="modified residue" description="Thyroxine; alternate" evidence="3">
    <location>
        <position position="2767"/>
    </location>
</feature>
<feature type="modified residue" description="Triiodothyronine; alternate" evidence="3">
    <location>
        <position position="2767"/>
    </location>
</feature>
<feature type="glycosylation site" description="N-linked (GlcNAc...) (complex) asparagine; alternate" evidence="6">
    <location>
        <position position="110"/>
    </location>
</feature>
<feature type="glycosylation site" description="N-linked (GlcNAc...) (hybrid) asparagine; alternate" evidence="6">
    <location>
        <position position="110"/>
    </location>
</feature>
<feature type="glycosylation site" description="N-linked (GlcNAc...) (complex) asparagine; alternate" evidence="6">
    <location>
        <position position="483"/>
    </location>
</feature>
<feature type="glycosylation site" description="N-linked (GlcNAc...) (hybrid) asparagine; alternate" evidence="6">
    <location>
        <position position="483"/>
    </location>
</feature>
<feature type="glycosylation site" description="N-linked (GlcNAc...) (complex) asparagine; alternate" evidence="6">
    <location>
        <position position="495"/>
    </location>
</feature>
<feature type="glycosylation site" description="N-linked (GlcNAc...) (hybrid) asparagine; alternate" evidence="6">
    <location>
        <position position="495"/>
    </location>
</feature>
<feature type="glycosylation site" description="N-linked (GlcNAc...) (complex) asparagine; alternate" evidence="6">
    <location>
        <position position="853"/>
    </location>
</feature>
<feature type="glycosylation site" description="N-linked (GlcNAc...) (hybrid) asparagine; alternate" evidence="6">
    <location>
        <position position="853"/>
    </location>
</feature>
<feature type="glycosylation site" description="N-linked (GlcNAc...) (complex) asparagine; alternate" evidence="6">
    <location>
        <position position="947"/>
    </location>
</feature>
<feature type="glycosylation site" description="N-linked (GlcNAc...) (hybrid) asparagine; alternate" evidence="6">
    <location>
        <position position="947"/>
    </location>
</feature>
<feature type="glycosylation site" description="N-linked (GlcNAc...) (complex) asparagine; alternate" evidence="6">
    <location>
        <position position="1140"/>
    </location>
</feature>
<feature type="glycosylation site" description="N-linked (GlcNAc...) (hybrid) asparagine; alternate" evidence="6">
    <location>
        <position position="1140"/>
    </location>
</feature>
<feature type="glycosylation site" description="N-linked (GlcNAc...) (high mannose) asparagine" evidence="6">
    <location>
        <position position="1365"/>
    </location>
</feature>
<feature type="glycosylation site" description="N-linked (GlcNAc...) (complex) asparagine; alternate" evidence="6">
    <location>
        <position position="1776"/>
    </location>
</feature>
<feature type="glycosylation site" description="N-linked (GlcNAc...) (hybrid) asparagine; alternate" evidence="6">
    <location>
        <position position="1776"/>
    </location>
</feature>
<feature type="glycosylation site" description="N-linked (GlcNAc...) (complex) asparagine; alternate" evidence="6">
    <location>
        <position position="1870"/>
    </location>
</feature>
<feature type="glycosylation site" description="N-linked (GlcNAc...) (hybrid) asparagine; alternate" evidence="6">
    <location>
        <position position="1870"/>
    </location>
</feature>
<feature type="glycosylation site" description="N-linked (GlcNAc...) (high mannose) asparagine" evidence="6">
    <location>
        <position position="2014"/>
    </location>
</feature>
<feature type="glycosylation site" description="N-linked (GlcNAc...) (high mannose) asparagine" evidence="6">
    <location>
        <position position="2123"/>
    </location>
</feature>
<feature type="glycosylation site" description="N-linked (GlcNAc...) (complex) asparagine; alternate" evidence="6">
    <location>
        <position position="2251"/>
    </location>
</feature>
<feature type="glycosylation site" description="N-linked (GlcNAc...) (hybrid) asparagine; alternate" evidence="6">
    <location>
        <position position="2251"/>
    </location>
</feature>
<feature type="glycosylation site" description="N-linked (GlcNAc...) (high mannose) asparagine" evidence="6">
    <location>
        <position position="2296"/>
    </location>
</feature>
<feature type="disulfide bond" evidence="4">
    <location>
        <begin position="34"/>
        <end position="52"/>
    </location>
</feature>
<feature type="disulfide bond" evidence="4">
    <location>
        <begin position="63"/>
        <end position="70"/>
    </location>
</feature>
<feature type="disulfide bond" evidence="4">
    <location>
        <begin position="72"/>
        <end position="92"/>
    </location>
</feature>
<feature type="disulfide bond" evidence="4">
    <location>
        <begin position="96"/>
        <end position="120"/>
    </location>
</feature>
<feature type="disulfide bond" evidence="4">
    <location>
        <begin position="131"/>
        <end position="138"/>
    </location>
</feature>
<feature type="disulfide bond" evidence="4">
    <location>
        <begin position="140"/>
        <end position="160"/>
    </location>
</feature>
<feature type="disulfide bond" evidence="4">
    <location>
        <begin position="164"/>
        <end position="183"/>
    </location>
</feature>
<feature type="disulfide bond" evidence="4">
    <location>
        <begin position="194"/>
        <end position="235"/>
    </location>
</feature>
<feature type="disulfide bond" evidence="4">
    <location>
        <begin position="301"/>
        <end position="319"/>
    </location>
</feature>
<feature type="disulfide bond" evidence="4">
    <location>
        <begin position="330"/>
        <end position="336"/>
    </location>
</feature>
<feature type="disulfide bond" evidence="4">
    <location>
        <begin position="338"/>
        <end position="358"/>
    </location>
</feature>
<feature type="disulfide bond" evidence="3">
    <location>
        <begin position="364"/>
        <end position="619"/>
    </location>
</feature>
<feature type="disulfide bond" evidence="3">
    <location>
        <begin position="408"/>
        <end position="607"/>
    </location>
</feature>
<feature type="disulfide bond" evidence="4">
    <location>
        <begin position="630"/>
        <end position="635"/>
    </location>
</feature>
<feature type="disulfide bond" evidence="4">
    <location>
        <begin position="637"/>
        <end position="657"/>
    </location>
</feature>
<feature type="disulfide bond" evidence="4">
    <location>
        <begin position="661"/>
        <end position="686"/>
    </location>
</feature>
<feature type="disulfide bond" evidence="4">
    <location>
        <begin position="697"/>
        <end position="702"/>
    </location>
</feature>
<feature type="disulfide bond" evidence="4">
    <location>
        <begin position="704"/>
        <end position="725"/>
    </location>
</feature>
<feature type="disulfide bond" evidence="4">
    <location>
        <begin position="729"/>
        <end position="762"/>
    </location>
</feature>
<feature type="disulfide bond" evidence="4">
    <location>
        <begin position="773"/>
        <end position="898"/>
    </location>
</feature>
<feature type="disulfide bond" evidence="4">
    <location>
        <begin position="900"/>
        <end position="921"/>
    </location>
</feature>
<feature type="disulfide bond" evidence="3">
    <location>
        <begin position="925"/>
        <end position="1031"/>
    </location>
</feature>
<feature type="disulfide bond" evidence="4">
    <location>
        <begin position="1042"/>
        <end position="1049"/>
    </location>
</feature>
<feature type="disulfide bond" evidence="4">
    <location>
        <begin position="1051"/>
        <end position="1073"/>
    </location>
</feature>
<feature type="disulfide bond" evidence="4">
    <location>
        <begin position="1077"/>
        <end position="1108"/>
    </location>
</feature>
<feature type="disulfide bond" evidence="4">
    <location>
        <begin position="1126"/>
        <end position="1145"/>
    </location>
</feature>
<feature type="disulfide bond" evidence="4">
    <location>
        <begin position="1149"/>
        <end position="1169"/>
    </location>
</feature>
<feature type="disulfide bond" evidence="4">
    <location>
        <begin position="1181"/>
        <end position="1188"/>
    </location>
</feature>
<feature type="disulfide bond" evidence="4">
    <location>
        <begin position="1190"/>
        <end position="1210"/>
    </location>
</feature>
<feature type="disulfide bond" evidence="3">
    <location>
        <begin position="1215"/>
        <end position="1264"/>
    </location>
</feature>
<feature type="disulfide bond" evidence="3">
    <location>
        <begin position="1231"/>
        <end position="1245"/>
    </location>
</feature>
<feature type="disulfide bond" evidence="3">
    <location>
        <begin position="1306"/>
        <end position="1356"/>
    </location>
</feature>
<feature type="disulfide bond" evidence="3">
    <location>
        <begin position="1331"/>
        <end position="1347"/>
    </location>
</feature>
<feature type="disulfide bond" evidence="3">
    <location>
        <begin position="1441"/>
        <end position="1461"/>
    </location>
</feature>
<feature type="disulfide bond" evidence="3">
    <location>
        <begin position="1464"/>
        <end position="1475"/>
    </location>
</feature>
<feature type="disulfide bond" evidence="3">
    <location>
        <begin position="1478"/>
        <end position="1492"/>
    </location>
</feature>
<feature type="disulfide bond" evidence="3">
    <location>
        <begin position="1495"/>
        <end position="1512"/>
    </location>
</feature>
<feature type="disulfide bond" evidence="4">
    <location>
        <begin position="1516"/>
        <end position="1525"/>
    </location>
</feature>
<feature type="disulfide bond" evidence="4">
    <location>
        <begin position="1545"/>
        <end position="1567"/>
    </location>
</feature>
<feature type="disulfide bond" evidence="3">
    <location>
        <begin position="1605"/>
        <end position="1629"/>
    </location>
</feature>
<feature type="disulfide bond" evidence="3">
    <location>
        <begin position="1609"/>
        <end position="1615"/>
    </location>
</feature>
<feature type="disulfide bond" evidence="3">
    <location>
        <begin position="1641"/>
        <end position="1664"/>
    </location>
</feature>
<feature type="disulfide bond" evidence="3">
    <location>
        <begin position="1726"/>
        <end position="1751"/>
    </location>
</feature>
<feature type="disulfide bond" evidence="3">
    <location>
        <begin position="1730"/>
        <end position="1736"/>
    </location>
</feature>
<feature type="disulfide bond" evidence="3">
    <location>
        <begin position="1735"/>
        <end position="1836"/>
    </location>
</feature>
<feature type="disulfide bond" evidence="3">
    <location>
        <begin position="1762"/>
        <end position="1779"/>
    </location>
</feature>
<feature type="disulfide bond" evidence="3">
    <location>
        <begin position="1894"/>
        <end position="1920"/>
    </location>
</feature>
<feature type="disulfide bond" evidence="3">
    <location>
        <begin position="1898"/>
        <end position="1905"/>
    </location>
</feature>
<feature type="disulfide bond" evidence="3">
    <location>
        <begin position="1929"/>
        <end position="1940"/>
    </location>
</feature>
<feature type="disulfide bond" evidence="3">
    <location>
        <begin position="1997"/>
        <end position="2025"/>
    </location>
</feature>
<feature type="disulfide bond" evidence="3">
    <location>
        <begin position="2001"/>
        <end position="2007"/>
    </location>
</feature>
<feature type="disulfide bond" evidence="3">
    <location>
        <begin position="2006"/>
        <end position="2077"/>
    </location>
</feature>
<feature type="disulfide bond" evidence="3">
    <location>
        <begin position="2036"/>
        <end position="2049"/>
    </location>
</feature>
<feature type="disulfide bond" evidence="3">
    <location>
        <begin position="2131"/>
        <end position="2155"/>
    </location>
</feature>
<feature type="disulfide bond" evidence="3">
    <location>
        <begin position="2135"/>
        <end position="2141"/>
    </location>
</feature>
<feature type="disulfide bond" evidence="3">
    <location>
        <begin position="2164"/>
        <end position="2173"/>
    </location>
</feature>
<feature type="disulfide bond" evidence="3">
    <location>
        <begin position="2443"/>
        <end position="2454"/>
    </location>
</feature>
<feature type="disulfide bond" evidence="3">
    <location>
        <begin position="2592"/>
        <end position="2716"/>
    </location>
</feature>
<feature type="sequence conflict" description="In Ref. 4; CAA29457." evidence="7" ref="4">
    <original>S</original>
    <variation>R</variation>
    <location>
        <position position="1206"/>
    </location>
</feature>
<feature type="helix" evidence="8">
    <location>
        <begin position="33"/>
        <end position="44"/>
    </location>
</feature>
<feature type="strand" evidence="8">
    <location>
        <begin position="67"/>
        <end position="69"/>
    </location>
</feature>
<feature type="strand" evidence="8">
    <location>
        <begin position="75"/>
        <end position="77"/>
    </location>
</feature>
<feature type="helix" evidence="8">
    <location>
        <begin position="95"/>
        <end position="104"/>
    </location>
</feature>
<feature type="strand" evidence="8">
    <location>
        <begin position="124"/>
        <end position="126"/>
    </location>
</feature>
<feature type="strand" evidence="8">
    <location>
        <begin position="145"/>
        <end position="147"/>
    </location>
</feature>
<feature type="helix" evidence="8">
    <location>
        <begin position="163"/>
        <end position="172"/>
    </location>
</feature>
<feature type="strand" evidence="8">
    <location>
        <begin position="187"/>
        <end position="189"/>
    </location>
</feature>
<feature type="strand" evidence="8">
    <location>
        <begin position="191"/>
        <end position="194"/>
    </location>
</feature>
<feature type="turn" evidence="8">
    <location>
        <begin position="199"/>
        <end position="202"/>
    </location>
</feature>
<feature type="helix" evidence="8">
    <location>
        <begin position="210"/>
        <end position="213"/>
    </location>
</feature>
<feature type="helix" evidence="8">
    <location>
        <begin position="215"/>
        <end position="218"/>
    </location>
</feature>
<feature type="helix" evidence="8">
    <location>
        <begin position="221"/>
        <end position="225"/>
    </location>
</feature>
<feature type="strand" evidence="8">
    <location>
        <begin position="235"/>
        <end position="238"/>
    </location>
</feature>
<feature type="turn" evidence="8">
    <location>
        <begin position="270"/>
        <end position="272"/>
    </location>
</feature>
<feature type="helix" evidence="8">
    <location>
        <begin position="275"/>
        <end position="292"/>
    </location>
</feature>
<feature type="strand" evidence="8">
    <location>
        <begin position="293"/>
        <end position="296"/>
    </location>
</feature>
<feature type="helix" evidence="8">
    <location>
        <begin position="300"/>
        <end position="311"/>
    </location>
</feature>
<feature type="strand" evidence="8">
    <location>
        <begin position="327"/>
        <end position="330"/>
    </location>
</feature>
<feature type="strand" evidence="8">
    <location>
        <begin position="336"/>
        <end position="339"/>
    </location>
</feature>
<feature type="helix" evidence="8">
    <location>
        <begin position="364"/>
        <end position="376"/>
    </location>
</feature>
<feature type="helix" evidence="8">
    <location>
        <begin position="413"/>
        <end position="417"/>
    </location>
</feature>
<feature type="turn" evidence="8">
    <location>
        <begin position="418"/>
        <end position="421"/>
    </location>
</feature>
<feature type="helix" evidence="8">
    <location>
        <begin position="423"/>
        <end position="426"/>
    </location>
</feature>
<feature type="helix" evidence="8">
    <location>
        <begin position="436"/>
        <end position="440"/>
    </location>
</feature>
<feature type="helix" evidence="8">
    <location>
        <begin position="441"/>
        <end position="443"/>
    </location>
</feature>
<feature type="strand" evidence="8">
    <location>
        <begin position="445"/>
        <end position="447"/>
    </location>
</feature>
<feature type="helix" evidence="8">
    <location>
        <begin position="450"/>
        <end position="456"/>
    </location>
</feature>
<feature type="helix" evidence="8">
    <location>
        <begin position="463"/>
        <end position="471"/>
    </location>
</feature>
<feature type="helix" evidence="8">
    <location>
        <begin position="475"/>
        <end position="480"/>
    </location>
</feature>
<feature type="turn" evidence="8">
    <location>
        <begin position="481"/>
        <end position="486"/>
    </location>
</feature>
<feature type="strand" evidence="8">
    <location>
        <begin position="491"/>
        <end position="494"/>
    </location>
</feature>
<feature type="helix" evidence="8">
    <location>
        <begin position="496"/>
        <end position="501"/>
    </location>
</feature>
<feature type="helix" evidence="8">
    <location>
        <begin position="557"/>
        <end position="571"/>
    </location>
</feature>
<feature type="helix" evidence="8">
    <location>
        <begin position="574"/>
        <end position="583"/>
    </location>
</feature>
<feature type="turn" evidence="8">
    <location>
        <begin position="588"/>
        <end position="590"/>
    </location>
</feature>
<feature type="helix" evidence="8">
    <location>
        <begin position="594"/>
        <end position="602"/>
    </location>
</feature>
<feature type="strand" evidence="8">
    <location>
        <begin position="621"/>
        <end position="623"/>
    </location>
</feature>
<feature type="strand" evidence="8">
    <location>
        <begin position="629"/>
        <end position="631"/>
    </location>
</feature>
<feature type="strand" evidence="8">
    <location>
        <begin position="634"/>
        <end position="636"/>
    </location>
</feature>
<feature type="strand" evidence="8">
    <location>
        <begin position="651"/>
        <end position="653"/>
    </location>
</feature>
<feature type="helix" evidence="8">
    <location>
        <begin position="660"/>
        <end position="672"/>
    </location>
</feature>
<feature type="strand" evidence="8">
    <location>
        <begin position="688"/>
        <end position="690"/>
    </location>
</feature>
<feature type="strand" evidence="8">
    <location>
        <begin position="694"/>
        <end position="700"/>
    </location>
</feature>
<feature type="strand" evidence="8">
    <location>
        <begin position="702"/>
        <end position="705"/>
    </location>
</feature>
<feature type="strand" evidence="8">
    <location>
        <begin position="719"/>
        <end position="721"/>
    </location>
</feature>
<feature type="helix" evidence="8">
    <location>
        <begin position="728"/>
        <end position="742"/>
    </location>
</feature>
<feature type="strand" evidence="8">
    <location>
        <begin position="766"/>
        <end position="768"/>
    </location>
</feature>
<feature type="strand" evidence="8">
    <location>
        <begin position="770"/>
        <end position="772"/>
    </location>
</feature>
<feature type="strand" evidence="8">
    <location>
        <begin position="899"/>
        <end position="901"/>
    </location>
</feature>
<feature type="helix" evidence="8">
    <location>
        <begin position="924"/>
        <end position="946"/>
    </location>
</feature>
<feature type="turn" evidence="8">
    <location>
        <begin position="947"/>
        <end position="949"/>
    </location>
</feature>
<feature type="helix" evidence="8">
    <location>
        <begin position="955"/>
        <end position="960"/>
    </location>
</feature>
<feature type="strand" evidence="8">
    <location>
        <begin position="967"/>
        <end position="969"/>
    </location>
</feature>
<feature type="helix" evidence="8">
    <location>
        <begin position="979"/>
        <end position="987"/>
    </location>
</feature>
<feature type="helix" evidence="8">
    <location>
        <begin position="991"/>
        <end position="1007"/>
    </location>
</feature>
<feature type="strand" evidence="8">
    <location>
        <begin position="1044"/>
        <end position="1046"/>
    </location>
</feature>
<feature type="helix" evidence="8">
    <location>
        <begin position="1076"/>
        <end position="1086"/>
    </location>
</feature>
<feature type="strand" evidence="8">
    <location>
        <begin position="1093"/>
        <end position="1097"/>
    </location>
</feature>
<feature type="turn" evidence="8">
    <location>
        <begin position="1100"/>
        <end position="1102"/>
    </location>
</feature>
<feature type="strand" evidence="8">
    <location>
        <begin position="1112"/>
        <end position="1114"/>
    </location>
</feature>
<feature type="strand" evidence="8">
    <location>
        <begin position="1116"/>
        <end position="1120"/>
    </location>
</feature>
<feature type="strand" evidence="8">
    <location>
        <begin position="1123"/>
        <end position="1127"/>
    </location>
</feature>
<feature type="helix" evidence="8">
    <location>
        <begin position="1148"/>
        <end position="1152"/>
    </location>
</feature>
<feature type="strand" evidence="8">
    <location>
        <begin position="1254"/>
        <end position="1257"/>
    </location>
</feature>
<feature type="strand" evidence="8">
    <location>
        <begin position="1289"/>
        <end position="1294"/>
    </location>
</feature>
<feature type="helix" evidence="8">
    <location>
        <begin position="1318"/>
        <end position="1326"/>
    </location>
</feature>
<feature type="turn" evidence="8">
    <location>
        <begin position="1327"/>
        <end position="1329"/>
    </location>
</feature>
<feature type="strand" evidence="8">
    <location>
        <begin position="1366"/>
        <end position="1371"/>
    </location>
</feature>
<feature type="strand" evidence="8">
    <location>
        <begin position="1438"/>
        <end position="1440"/>
    </location>
</feature>
<feature type="turn" evidence="8">
    <location>
        <begin position="1443"/>
        <end position="1445"/>
    </location>
</feature>
<feature type="helix" evidence="8">
    <location>
        <begin position="1853"/>
        <end position="1856"/>
    </location>
</feature>
<feature type="helix" evidence="8">
    <location>
        <begin position="1862"/>
        <end position="1864"/>
    </location>
</feature>
<feature type="strand" evidence="8">
    <location>
        <begin position="1865"/>
        <end position="1867"/>
    </location>
</feature>
<feature type="helix" evidence="8">
    <location>
        <begin position="1888"/>
        <end position="1900"/>
    </location>
</feature>
<feature type="turn" evidence="8">
    <location>
        <begin position="1902"/>
        <end position="1904"/>
    </location>
</feature>
<feature type="strand" evidence="8">
    <location>
        <begin position="1907"/>
        <end position="1910"/>
    </location>
</feature>
<feature type="strand" evidence="8">
    <location>
        <begin position="1920"/>
        <end position="1923"/>
    </location>
</feature>
<feature type="helix" evidence="8">
    <location>
        <begin position="1937"/>
        <end position="1939"/>
    </location>
</feature>
<feature type="strand" evidence="8">
    <location>
        <begin position="1942"/>
        <end position="1946"/>
    </location>
</feature>
<feature type="strand" evidence="8">
    <location>
        <begin position="1970"/>
        <end position="1976"/>
    </location>
</feature>
<feature type="strand" evidence="8">
    <location>
        <begin position="1979"/>
        <end position="1981"/>
    </location>
</feature>
<feature type="helix" evidence="8">
    <location>
        <begin position="1990"/>
        <end position="2003"/>
    </location>
</feature>
<feature type="strand" evidence="8">
    <location>
        <begin position="2010"/>
        <end position="2015"/>
    </location>
</feature>
<feature type="turn" evidence="8">
    <location>
        <begin position="2017"/>
        <end position="2020"/>
    </location>
</feature>
<feature type="strand" evidence="8">
    <location>
        <begin position="2022"/>
        <end position="2029"/>
    </location>
</feature>
<feature type="strand" evidence="8">
    <location>
        <begin position="2033"/>
        <end position="2040"/>
    </location>
</feature>
<feature type="strand" evidence="8">
    <location>
        <begin position="2042"/>
        <end position="2044"/>
    </location>
</feature>
<feature type="strand" evidence="8">
    <location>
        <begin position="2053"/>
        <end position="2055"/>
    </location>
</feature>
<feature type="helix" evidence="8">
    <location>
        <begin position="2091"/>
        <end position="2093"/>
    </location>
</feature>
<feature type="strand" evidence="8">
    <location>
        <begin position="2094"/>
        <end position="2096"/>
    </location>
</feature>
<feature type="helix" evidence="8">
    <location>
        <begin position="2099"/>
        <end position="2101"/>
    </location>
</feature>
<feature type="strand" evidence="8">
    <location>
        <begin position="2106"/>
        <end position="2108"/>
    </location>
</feature>
<feature type="strand" evidence="8">
    <location>
        <begin position="2110"/>
        <end position="2116"/>
    </location>
</feature>
<feature type="helix" evidence="8">
    <location>
        <begin position="2124"/>
        <end position="2137"/>
    </location>
</feature>
<feature type="strand" evidence="8">
    <location>
        <begin position="2143"/>
        <end position="2148"/>
    </location>
</feature>
<feature type="strand" evidence="8">
    <location>
        <begin position="2150"/>
        <end position="2158"/>
    </location>
</feature>
<feature type="strand" evidence="8">
    <location>
        <begin position="2182"/>
        <end position="2186"/>
    </location>
</feature>
<feature type="strand" evidence="8">
    <location>
        <begin position="2196"/>
        <end position="2199"/>
    </location>
</feature>
<feature type="strand" evidence="8">
    <location>
        <begin position="2201"/>
        <end position="2204"/>
    </location>
</feature>
<feature type="turn" evidence="8">
    <location>
        <begin position="2205"/>
        <end position="2207"/>
    </location>
</feature>
<feature type="strand" evidence="8">
    <location>
        <begin position="2208"/>
        <end position="2211"/>
    </location>
</feature>
<feature type="strand" evidence="8">
    <location>
        <begin position="2213"/>
        <end position="2221"/>
    </location>
</feature>
<feature type="strand" evidence="8">
    <location>
        <begin position="2223"/>
        <end position="2233"/>
    </location>
</feature>
<feature type="helix" evidence="8">
    <location>
        <begin position="2240"/>
        <end position="2242"/>
    </location>
</feature>
<feature type="strand" evidence="8">
    <location>
        <begin position="2243"/>
        <end position="2245"/>
    </location>
</feature>
<feature type="strand" evidence="8">
    <location>
        <begin position="2254"/>
        <end position="2257"/>
    </location>
</feature>
<feature type="strand" evidence="8">
    <location>
        <begin position="2276"/>
        <end position="2278"/>
    </location>
</feature>
<feature type="strand" evidence="8">
    <location>
        <begin position="2284"/>
        <end position="2292"/>
    </location>
</feature>
<feature type="strand" evidence="8">
    <location>
        <begin position="2295"/>
        <end position="2303"/>
    </location>
</feature>
<feature type="strand" evidence="8">
    <location>
        <begin position="2308"/>
        <end position="2310"/>
    </location>
</feature>
<feature type="strand" evidence="8">
    <location>
        <begin position="2313"/>
        <end position="2315"/>
    </location>
</feature>
<feature type="helix" evidence="8">
    <location>
        <begin position="2321"/>
        <end position="2325"/>
    </location>
</feature>
<feature type="turn" evidence="8">
    <location>
        <begin position="2326"/>
        <end position="2328"/>
    </location>
</feature>
<feature type="strand" evidence="8">
    <location>
        <begin position="2329"/>
        <end position="2334"/>
    </location>
</feature>
<feature type="helix" evidence="8">
    <location>
        <begin position="2340"/>
        <end position="2343"/>
    </location>
</feature>
<feature type="strand" evidence="8">
    <location>
        <begin position="2347"/>
        <end position="2351"/>
    </location>
</feature>
<feature type="helix" evidence="8">
    <location>
        <begin position="2355"/>
        <end position="2358"/>
    </location>
</feature>
<feature type="helix" evidence="8">
    <location>
        <begin position="2361"/>
        <end position="2370"/>
    </location>
</feature>
<feature type="turn" evidence="8">
    <location>
        <begin position="2371"/>
        <end position="2375"/>
    </location>
</feature>
<feature type="strand" evidence="8">
    <location>
        <begin position="2376"/>
        <end position="2385"/>
    </location>
</feature>
<feature type="helix" evidence="8">
    <location>
        <begin position="2389"/>
        <end position="2394"/>
    </location>
</feature>
<feature type="helix" evidence="8">
    <location>
        <begin position="2395"/>
        <end position="2397"/>
    </location>
</feature>
<feature type="strand" evidence="8">
    <location>
        <begin position="2403"/>
        <end position="2405"/>
    </location>
</feature>
<feature type="strand" evidence="8">
    <location>
        <begin position="2409"/>
        <end position="2415"/>
    </location>
</feature>
<feature type="helix" evidence="8">
    <location>
        <begin position="2427"/>
        <end position="2441"/>
    </location>
</feature>
<feature type="helix" evidence="8">
    <location>
        <begin position="2448"/>
        <end position="2455"/>
    </location>
</feature>
<feature type="helix" evidence="8">
    <location>
        <begin position="2460"/>
        <end position="2471"/>
    </location>
</feature>
<feature type="turn" evidence="8">
    <location>
        <begin position="2473"/>
        <end position="2476"/>
    </location>
</feature>
<feature type="strand" evidence="8">
    <location>
        <begin position="2486"/>
        <end position="2488"/>
    </location>
</feature>
<feature type="helix" evidence="8">
    <location>
        <begin position="2493"/>
        <end position="2496"/>
    </location>
</feature>
<feature type="strand" evidence="8">
    <location>
        <begin position="2507"/>
        <end position="2514"/>
    </location>
</feature>
<feature type="helix" evidence="8">
    <location>
        <begin position="2517"/>
        <end position="2520"/>
    </location>
</feature>
<feature type="helix" evidence="8">
    <location>
        <begin position="2522"/>
        <end position="2531"/>
    </location>
</feature>
<feature type="turn" evidence="8">
    <location>
        <begin position="2537"/>
        <end position="2539"/>
    </location>
</feature>
<feature type="helix" evidence="8">
    <location>
        <begin position="2543"/>
        <end position="2548"/>
    </location>
</feature>
<feature type="helix" evidence="8">
    <location>
        <begin position="2556"/>
        <end position="2564"/>
    </location>
</feature>
<feature type="helix" evidence="8">
    <location>
        <begin position="2577"/>
        <end position="2589"/>
    </location>
</feature>
<feature type="helix" evidence="8">
    <location>
        <begin position="2593"/>
        <end position="2603"/>
    </location>
</feature>
<feature type="strand" evidence="8">
    <location>
        <begin position="2609"/>
        <end position="2614"/>
    </location>
</feature>
<feature type="strand" evidence="8">
    <location>
        <begin position="2622"/>
        <end position="2625"/>
    </location>
</feature>
<feature type="turn" evidence="8">
    <location>
        <begin position="2627"/>
        <end position="2633"/>
    </location>
</feature>
<feature type="helix" evidence="8">
    <location>
        <begin position="2635"/>
        <end position="2637"/>
    </location>
</feature>
<feature type="strand" evidence="8">
    <location>
        <begin position="2642"/>
        <end position="2645"/>
    </location>
</feature>
<feature type="helix" evidence="8">
    <location>
        <begin position="2647"/>
        <end position="2666"/>
    </location>
</feature>
<feature type="strand" evidence="8">
    <location>
        <begin position="2681"/>
        <end position="2683"/>
    </location>
</feature>
<feature type="strand" evidence="8">
    <location>
        <begin position="2697"/>
        <end position="2700"/>
    </location>
</feature>
<feature type="strand" evidence="8">
    <location>
        <begin position="2707"/>
        <end position="2709"/>
    </location>
</feature>
<feature type="helix" evidence="8">
    <location>
        <begin position="2713"/>
        <end position="2727"/>
    </location>
</feature>
<protein>
    <recommendedName>
        <fullName>Thyroglobulin</fullName>
        <shortName>Tg</shortName>
    </recommendedName>
</protein>